<organism>
    <name type="scientific">Methanosarcina barkeri (strain Fusaro / DSM 804)</name>
    <dbReference type="NCBI Taxonomy" id="269797"/>
    <lineage>
        <taxon>Archaea</taxon>
        <taxon>Methanobacteriati</taxon>
        <taxon>Methanobacteriota</taxon>
        <taxon>Stenosarchaea group</taxon>
        <taxon>Methanomicrobia</taxon>
        <taxon>Methanosarcinales</taxon>
        <taxon>Methanosarcinaceae</taxon>
        <taxon>Methanosarcina</taxon>
    </lineage>
</organism>
<reference key="1">
    <citation type="journal article" date="2006" name="J. Bacteriol.">
        <title>The Methanosarcina barkeri genome: comparative analysis with Methanosarcina acetivorans and Methanosarcina mazei reveals extensive rearrangement within methanosarcinal genomes.</title>
        <authorList>
            <person name="Maeder D.L."/>
            <person name="Anderson I."/>
            <person name="Brettin T.S."/>
            <person name="Bruce D.C."/>
            <person name="Gilna P."/>
            <person name="Han C.S."/>
            <person name="Lapidus A."/>
            <person name="Metcalf W.W."/>
            <person name="Saunders E."/>
            <person name="Tapia R."/>
            <person name="Sowers K.R."/>
        </authorList>
    </citation>
    <scope>NUCLEOTIDE SEQUENCE [LARGE SCALE GENOMIC DNA]</scope>
    <source>
        <strain>Fusaro / DSM 804</strain>
    </source>
</reference>
<feature type="chain" id="PRO_1000066787" description="UPF0212 protein Mbar_A2902">
    <location>
        <begin position="1"/>
        <end position="129"/>
    </location>
</feature>
<protein>
    <recommendedName>
        <fullName evidence="1">UPF0212 protein Mbar_A2902</fullName>
    </recommendedName>
</protein>
<sequence>MKNFHVVLEAAWLVRDVKTADDAIGVAISEAGKRLNPKLDFVEVDVGTTSCPLCGEPFSSVFIAANTALVGLIFEMKVFDAESAEHAERIAKSVIGKSLRDIPLTVVEVTEFERSTEKGEQQHKSKTEK</sequence>
<proteinExistence type="inferred from homology"/>
<dbReference type="EMBL" id="CP000099">
    <property type="protein sequence ID" value="AAZ71800.1"/>
    <property type="molecule type" value="Genomic_DNA"/>
</dbReference>
<dbReference type="SMR" id="Q467Z2"/>
<dbReference type="STRING" id="269797.Mbar_A2902"/>
<dbReference type="PaxDb" id="269797-Mbar_A2902"/>
<dbReference type="KEGG" id="mba:Mbar_A2902"/>
<dbReference type="eggNOG" id="arCOG02119">
    <property type="taxonomic scope" value="Archaea"/>
</dbReference>
<dbReference type="HOGENOM" id="CLU_138334_0_0_2"/>
<dbReference type="OrthoDB" id="63517at2157"/>
<dbReference type="HAMAP" id="MF_01223">
    <property type="entry name" value="UPF0212"/>
    <property type="match status" value="1"/>
</dbReference>
<dbReference type="InterPro" id="IPR007564">
    <property type="entry name" value="UPF0212"/>
</dbReference>
<dbReference type="NCBIfam" id="NF003035">
    <property type="entry name" value="PRK03922.1"/>
    <property type="match status" value="1"/>
</dbReference>
<dbReference type="PANTHER" id="PTHR42199">
    <property type="entry name" value="UPF0212 PROTEIN MJ0068"/>
    <property type="match status" value="1"/>
</dbReference>
<dbReference type="PANTHER" id="PTHR42199:SF1">
    <property type="entry name" value="UPF0212 PROTEIN TK1194"/>
    <property type="match status" value="1"/>
</dbReference>
<dbReference type="Pfam" id="PF04475">
    <property type="entry name" value="DUF555"/>
    <property type="match status" value="1"/>
</dbReference>
<dbReference type="PIRSF" id="PIRSF016934">
    <property type="entry name" value="UCP016934"/>
    <property type="match status" value="1"/>
</dbReference>
<name>Y2902_METBF</name>
<evidence type="ECO:0000255" key="1">
    <source>
        <dbReference type="HAMAP-Rule" id="MF_01223"/>
    </source>
</evidence>
<gene>
    <name type="ordered locus">Mbar_A2902</name>
</gene>
<comment type="similarity">
    <text evidence="1">Belongs to the UPF0212 family.</text>
</comment>
<accession>Q467Z2</accession>